<name>NHLC2_HUMAN</name>
<feature type="chain" id="PRO_0000313808" description="NHL repeat-containing protein 2">
    <location>
        <begin position="1"/>
        <end position="726"/>
    </location>
</feature>
<feature type="domain" description="Thioredoxin" evidence="2">
    <location>
        <begin position="43"/>
        <end position="200"/>
    </location>
</feature>
<feature type="repeat" description="NHL 1">
    <location>
        <begin position="212"/>
        <end position="254"/>
    </location>
</feature>
<feature type="repeat" description="NHL 2">
    <location>
        <begin position="265"/>
        <end position="307"/>
    </location>
</feature>
<feature type="repeat" description="NHL 3">
    <location>
        <begin position="335"/>
        <end position="369"/>
    </location>
</feature>
<feature type="repeat" description="NHL 4">
    <location>
        <begin position="409"/>
        <end position="439"/>
    </location>
</feature>
<feature type="repeat" description="NHL 5">
    <location>
        <begin position="461"/>
        <end position="505"/>
    </location>
</feature>
<feature type="repeat" description="NHL 6">
    <location>
        <begin position="518"/>
        <end position="562"/>
    </location>
</feature>
<feature type="splice variant" id="VSP_030153" description="In isoform 2." evidence="6">
    <location>
        <begin position="1"/>
        <end position="359"/>
    </location>
</feature>
<feature type="sequence variant" id="VAR_081171" description="In FINCA; uncertain significance; decreases protein stability; dbSNP:rs201701259." evidence="3 4">
    <original>D</original>
    <variation>Y</variation>
    <location>
        <position position="148"/>
    </location>
</feature>
<feature type="sequence variant" id="VAR_037749" description="In dbSNP:rs7913176.">
    <original>V</original>
    <variation>I</variation>
    <location>
        <position position="314"/>
    </location>
</feature>
<feature type="sequence conflict" description="In Ref. 1; BAC05316." evidence="7" ref="1">
    <original>D</original>
    <variation>N</variation>
    <location>
        <position position="216"/>
    </location>
</feature>
<feature type="helix" evidence="11">
    <location>
        <begin position="11"/>
        <end position="14"/>
    </location>
</feature>
<feature type="helix" evidence="11">
    <location>
        <begin position="15"/>
        <end position="26"/>
    </location>
</feature>
<feature type="helix" evidence="11">
    <location>
        <begin position="31"/>
        <end position="46"/>
    </location>
</feature>
<feature type="strand" evidence="11">
    <location>
        <begin position="63"/>
        <end position="68"/>
    </location>
</feature>
<feature type="helix" evidence="11">
    <location>
        <begin position="72"/>
        <end position="75"/>
    </location>
</feature>
<feature type="strand" evidence="11">
    <location>
        <begin position="79"/>
        <end position="86"/>
    </location>
</feature>
<feature type="helix" evidence="11">
    <location>
        <begin position="91"/>
        <end position="106"/>
    </location>
</feature>
<feature type="turn" evidence="11">
    <location>
        <begin position="109"/>
        <end position="112"/>
    </location>
</feature>
<feature type="strand" evidence="11">
    <location>
        <begin position="113"/>
        <end position="119"/>
    </location>
</feature>
<feature type="helix" evidence="11">
    <location>
        <begin position="124"/>
        <end position="127"/>
    </location>
</feature>
<feature type="helix" evidence="11">
    <location>
        <begin position="129"/>
        <end position="139"/>
    </location>
</feature>
<feature type="strand" evidence="11">
    <location>
        <begin position="145"/>
        <end position="147"/>
    </location>
</feature>
<feature type="helix" evidence="11">
    <location>
        <begin position="152"/>
        <end position="157"/>
    </location>
</feature>
<feature type="strand" evidence="11">
    <location>
        <begin position="161"/>
        <end position="168"/>
    </location>
</feature>
<feature type="strand" evidence="11">
    <location>
        <begin position="172"/>
        <end position="181"/>
    </location>
</feature>
<feature type="helix" evidence="11">
    <location>
        <begin position="184"/>
        <end position="200"/>
    </location>
</feature>
<feature type="strand" evidence="10">
    <location>
        <begin position="229"/>
        <end position="231"/>
    </location>
</feature>
<feature type="turn" evidence="10">
    <location>
        <begin position="233"/>
        <end position="235"/>
    </location>
</feature>
<feature type="strand" evidence="10">
    <location>
        <begin position="238"/>
        <end position="242"/>
    </location>
</feature>
<feature type="helix" evidence="10">
    <location>
        <begin position="243"/>
        <end position="245"/>
    </location>
</feature>
<feature type="strand" evidence="10">
    <location>
        <begin position="247"/>
        <end position="251"/>
    </location>
</feature>
<feature type="strand" evidence="10">
    <location>
        <begin position="257"/>
        <end position="262"/>
    </location>
</feature>
<feature type="helix" evidence="10">
    <location>
        <begin position="273"/>
        <end position="275"/>
    </location>
</feature>
<feature type="strand" evidence="10">
    <location>
        <begin position="284"/>
        <end position="287"/>
    </location>
</feature>
<feature type="strand" evidence="10">
    <location>
        <begin position="290"/>
        <end position="295"/>
    </location>
</feature>
<feature type="helix" evidence="10">
    <location>
        <begin position="296"/>
        <end position="298"/>
    </location>
</feature>
<feature type="strand" evidence="10">
    <location>
        <begin position="300"/>
        <end position="305"/>
    </location>
</feature>
<feature type="turn" evidence="10">
    <location>
        <begin position="306"/>
        <end position="309"/>
    </location>
</feature>
<feature type="strand" evidence="10">
    <location>
        <begin position="310"/>
        <end position="315"/>
    </location>
</feature>
<feature type="strand" evidence="11">
    <location>
        <begin position="318"/>
        <end position="320"/>
    </location>
</feature>
<feature type="strand" evidence="10">
    <location>
        <begin position="324"/>
        <end position="329"/>
    </location>
</feature>
<feature type="helix" evidence="10">
    <location>
        <begin position="330"/>
        <end position="332"/>
    </location>
</feature>
<feature type="strand" evidence="10">
    <location>
        <begin position="338"/>
        <end position="344"/>
    </location>
</feature>
<feature type="strand" evidence="10">
    <location>
        <begin position="355"/>
        <end position="360"/>
    </location>
</feature>
<feature type="helix" evidence="10">
    <location>
        <begin position="361"/>
        <end position="363"/>
    </location>
</feature>
<feature type="strand" evidence="10">
    <location>
        <begin position="365"/>
        <end position="374"/>
    </location>
</feature>
<feature type="strand" evidence="10">
    <location>
        <begin position="386"/>
        <end position="391"/>
    </location>
</feature>
<feature type="strand" evidence="10">
    <location>
        <begin position="394"/>
        <end position="397"/>
    </location>
</feature>
<feature type="strand" evidence="10">
    <location>
        <begin position="401"/>
        <end position="403"/>
    </location>
</feature>
<feature type="helix" evidence="10">
    <location>
        <begin position="404"/>
        <end position="406"/>
    </location>
</feature>
<feature type="strand" evidence="10">
    <location>
        <begin position="408"/>
        <end position="418"/>
    </location>
</feature>
<feature type="turn" evidence="10">
    <location>
        <begin position="421"/>
        <end position="423"/>
    </location>
</feature>
<feature type="strand" evidence="10">
    <location>
        <begin position="425"/>
        <end position="430"/>
    </location>
</feature>
<feature type="turn" evidence="10">
    <location>
        <begin position="431"/>
        <end position="434"/>
    </location>
</feature>
<feature type="strand" evidence="10">
    <location>
        <begin position="435"/>
        <end position="440"/>
    </location>
</feature>
<feature type="turn" evidence="10">
    <location>
        <begin position="441"/>
        <end position="443"/>
    </location>
</feature>
<feature type="strand" evidence="10">
    <location>
        <begin position="446"/>
        <end position="452"/>
    </location>
</feature>
<feature type="helix" evidence="10">
    <location>
        <begin position="469"/>
        <end position="471"/>
    </location>
</feature>
<feature type="strand" evidence="10">
    <location>
        <begin position="480"/>
        <end position="483"/>
    </location>
</feature>
<feature type="turn" evidence="10">
    <location>
        <begin position="484"/>
        <end position="487"/>
    </location>
</feature>
<feature type="strand" evidence="10">
    <location>
        <begin position="488"/>
        <end position="493"/>
    </location>
</feature>
<feature type="helix" evidence="10">
    <location>
        <begin position="494"/>
        <end position="496"/>
    </location>
</feature>
<feature type="strand" evidence="10">
    <location>
        <begin position="498"/>
        <end position="502"/>
    </location>
</feature>
<feature type="turn" evidence="10">
    <location>
        <begin position="504"/>
        <end position="506"/>
    </location>
</feature>
<feature type="strand" evidence="10">
    <location>
        <begin position="508"/>
        <end position="513"/>
    </location>
</feature>
<feature type="strand" evidence="10">
    <location>
        <begin position="522"/>
        <end position="525"/>
    </location>
</feature>
<feature type="turn" evidence="10">
    <location>
        <begin position="526"/>
        <end position="528"/>
    </location>
</feature>
<feature type="strand" evidence="10">
    <location>
        <begin position="537"/>
        <end position="539"/>
    </location>
</feature>
<feature type="helix" evidence="10">
    <location>
        <begin position="541"/>
        <end position="543"/>
    </location>
</feature>
<feature type="strand" evidence="10">
    <location>
        <begin position="544"/>
        <end position="550"/>
    </location>
</feature>
<feature type="helix" evidence="10">
    <location>
        <begin position="551"/>
        <end position="553"/>
    </location>
</feature>
<feature type="strand" evidence="10">
    <location>
        <begin position="555"/>
        <end position="560"/>
    </location>
</feature>
<feature type="turn" evidence="10">
    <location>
        <begin position="561"/>
        <end position="564"/>
    </location>
</feature>
<feature type="strand" evidence="10">
    <location>
        <begin position="565"/>
        <end position="568"/>
    </location>
</feature>
<proteinExistence type="evidence at protein level"/>
<reference key="1">
    <citation type="journal article" date="2004" name="Nat. Genet.">
        <title>Complete sequencing and characterization of 21,243 full-length human cDNAs.</title>
        <authorList>
            <person name="Ota T."/>
            <person name="Suzuki Y."/>
            <person name="Nishikawa T."/>
            <person name="Otsuki T."/>
            <person name="Sugiyama T."/>
            <person name="Irie R."/>
            <person name="Wakamatsu A."/>
            <person name="Hayashi K."/>
            <person name="Sato H."/>
            <person name="Nagai K."/>
            <person name="Kimura K."/>
            <person name="Makita H."/>
            <person name="Sekine M."/>
            <person name="Obayashi M."/>
            <person name="Nishi T."/>
            <person name="Shibahara T."/>
            <person name="Tanaka T."/>
            <person name="Ishii S."/>
            <person name="Yamamoto J."/>
            <person name="Saito K."/>
            <person name="Kawai Y."/>
            <person name="Isono Y."/>
            <person name="Nakamura Y."/>
            <person name="Nagahari K."/>
            <person name="Murakami K."/>
            <person name="Yasuda T."/>
            <person name="Iwayanagi T."/>
            <person name="Wagatsuma M."/>
            <person name="Shiratori A."/>
            <person name="Sudo H."/>
            <person name="Hosoiri T."/>
            <person name="Kaku Y."/>
            <person name="Kodaira H."/>
            <person name="Kondo H."/>
            <person name="Sugawara M."/>
            <person name="Takahashi M."/>
            <person name="Kanda K."/>
            <person name="Yokoi T."/>
            <person name="Furuya T."/>
            <person name="Kikkawa E."/>
            <person name="Omura Y."/>
            <person name="Abe K."/>
            <person name="Kamihara K."/>
            <person name="Katsuta N."/>
            <person name="Sato K."/>
            <person name="Tanikawa M."/>
            <person name="Yamazaki M."/>
            <person name="Ninomiya K."/>
            <person name="Ishibashi T."/>
            <person name="Yamashita H."/>
            <person name="Murakawa K."/>
            <person name="Fujimori K."/>
            <person name="Tanai H."/>
            <person name="Kimata M."/>
            <person name="Watanabe M."/>
            <person name="Hiraoka S."/>
            <person name="Chiba Y."/>
            <person name="Ishida S."/>
            <person name="Ono Y."/>
            <person name="Takiguchi S."/>
            <person name="Watanabe S."/>
            <person name="Yosida M."/>
            <person name="Hotuta T."/>
            <person name="Kusano J."/>
            <person name="Kanehori K."/>
            <person name="Takahashi-Fujii A."/>
            <person name="Hara H."/>
            <person name="Tanase T.-O."/>
            <person name="Nomura Y."/>
            <person name="Togiya S."/>
            <person name="Komai F."/>
            <person name="Hara R."/>
            <person name="Takeuchi K."/>
            <person name="Arita M."/>
            <person name="Imose N."/>
            <person name="Musashino K."/>
            <person name="Yuuki H."/>
            <person name="Oshima A."/>
            <person name="Sasaki N."/>
            <person name="Aotsuka S."/>
            <person name="Yoshikawa Y."/>
            <person name="Matsunawa H."/>
            <person name="Ichihara T."/>
            <person name="Shiohata N."/>
            <person name="Sano S."/>
            <person name="Moriya S."/>
            <person name="Momiyama H."/>
            <person name="Satoh N."/>
            <person name="Takami S."/>
            <person name="Terashima Y."/>
            <person name="Suzuki O."/>
            <person name="Nakagawa S."/>
            <person name="Senoh A."/>
            <person name="Mizoguchi H."/>
            <person name="Goto Y."/>
            <person name="Shimizu F."/>
            <person name="Wakebe H."/>
            <person name="Hishigaki H."/>
            <person name="Watanabe T."/>
            <person name="Sugiyama A."/>
            <person name="Takemoto M."/>
            <person name="Kawakami B."/>
            <person name="Yamazaki M."/>
            <person name="Watanabe K."/>
            <person name="Kumagai A."/>
            <person name="Itakura S."/>
            <person name="Fukuzumi Y."/>
            <person name="Fujimori Y."/>
            <person name="Komiyama M."/>
            <person name="Tashiro H."/>
            <person name="Tanigami A."/>
            <person name="Fujiwara T."/>
            <person name="Ono T."/>
            <person name="Yamada K."/>
            <person name="Fujii Y."/>
            <person name="Ozaki K."/>
            <person name="Hirao M."/>
            <person name="Ohmori Y."/>
            <person name="Kawabata A."/>
            <person name="Hikiji T."/>
            <person name="Kobatake N."/>
            <person name="Inagaki H."/>
            <person name="Ikema Y."/>
            <person name="Okamoto S."/>
            <person name="Okitani R."/>
            <person name="Kawakami T."/>
            <person name="Noguchi S."/>
            <person name="Itoh T."/>
            <person name="Shigeta K."/>
            <person name="Senba T."/>
            <person name="Matsumura K."/>
            <person name="Nakajima Y."/>
            <person name="Mizuno T."/>
            <person name="Morinaga M."/>
            <person name="Sasaki M."/>
            <person name="Togashi T."/>
            <person name="Oyama M."/>
            <person name="Hata H."/>
            <person name="Watanabe M."/>
            <person name="Komatsu T."/>
            <person name="Mizushima-Sugano J."/>
            <person name="Satoh T."/>
            <person name="Shirai Y."/>
            <person name="Takahashi Y."/>
            <person name="Nakagawa K."/>
            <person name="Okumura K."/>
            <person name="Nagase T."/>
            <person name="Nomura N."/>
            <person name="Kikuchi H."/>
            <person name="Masuho Y."/>
            <person name="Yamashita R."/>
            <person name="Nakai K."/>
            <person name="Yada T."/>
            <person name="Nakamura Y."/>
            <person name="Ohara O."/>
            <person name="Isogai T."/>
            <person name="Sugano S."/>
        </authorList>
    </citation>
    <scope>NUCLEOTIDE SEQUENCE [LARGE SCALE MRNA] (ISOFORM 1)</scope>
    <source>
        <tissue>Gastric mucosa</tissue>
    </source>
</reference>
<reference key="2">
    <citation type="journal article" date="2004" name="Nature">
        <title>The DNA sequence and comparative analysis of human chromosome 10.</title>
        <authorList>
            <person name="Deloukas P."/>
            <person name="Earthrowl M.E."/>
            <person name="Grafham D.V."/>
            <person name="Rubenfield M."/>
            <person name="French L."/>
            <person name="Steward C.A."/>
            <person name="Sims S.K."/>
            <person name="Jones M.C."/>
            <person name="Searle S."/>
            <person name="Scott C."/>
            <person name="Howe K."/>
            <person name="Hunt S.E."/>
            <person name="Andrews T.D."/>
            <person name="Gilbert J.G.R."/>
            <person name="Swarbreck D."/>
            <person name="Ashurst J.L."/>
            <person name="Taylor A."/>
            <person name="Battles J."/>
            <person name="Bird C.P."/>
            <person name="Ainscough R."/>
            <person name="Almeida J.P."/>
            <person name="Ashwell R.I.S."/>
            <person name="Ambrose K.D."/>
            <person name="Babbage A.K."/>
            <person name="Bagguley C.L."/>
            <person name="Bailey J."/>
            <person name="Banerjee R."/>
            <person name="Bates K."/>
            <person name="Beasley H."/>
            <person name="Bray-Allen S."/>
            <person name="Brown A.J."/>
            <person name="Brown J.Y."/>
            <person name="Burford D.C."/>
            <person name="Burrill W."/>
            <person name="Burton J."/>
            <person name="Cahill P."/>
            <person name="Camire D."/>
            <person name="Carter N.P."/>
            <person name="Chapman J.C."/>
            <person name="Clark S.Y."/>
            <person name="Clarke G."/>
            <person name="Clee C.M."/>
            <person name="Clegg S."/>
            <person name="Corby N."/>
            <person name="Coulson A."/>
            <person name="Dhami P."/>
            <person name="Dutta I."/>
            <person name="Dunn M."/>
            <person name="Faulkner L."/>
            <person name="Frankish A."/>
            <person name="Frankland J.A."/>
            <person name="Garner P."/>
            <person name="Garnett J."/>
            <person name="Gribble S."/>
            <person name="Griffiths C."/>
            <person name="Grocock R."/>
            <person name="Gustafson E."/>
            <person name="Hammond S."/>
            <person name="Harley J.L."/>
            <person name="Hart E."/>
            <person name="Heath P.D."/>
            <person name="Ho T.P."/>
            <person name="Hopkins B."/>
            <person name="Horne J."/>
            <person name="Howden P.J."/>
            <person name="Huckle E."/>
            <person name="Hynds C."/>
            <person name="Johnson C."/>
            <person name="Johnson D."/>
            <person name="Kana A."/>
            <person name="Kay M."/>
            <person name="Kimberley A.M."/>
            <person name="Kershaw J.K."/>
            <person name="Kokkinaki M."/>
            <person name="Laird G.K."/>
            <person name="Lawlor S."/>
            <person name="Lee H.M."/>
            <person name="Leongamornlert D.A."/>
            <person name="Laird G."/>
            <person name="Lloyd C."/>
            <person name="Lloyd D.M."/>
            <person name="Loveland J."/>
            <person name="Lovell J."/>
            <person name="McLaren S."/>
            <person name="McLay K.E."/>
            <person name="McMurray A."/>
            <person name="Mashreghi-Mohammadi M."/>
            <person name="Matthews L."/>
            <person name="Milne S."/>
            <person name="Nickerson T."/>
            <person name="Nguyen M."/>
            <person name="Overton-Larty E."/>
            <person name="Palmer S.A."/>
            <person name="Pearce A.V."/>
            <person name="Peck A.I."/>
            <person name="Pelan S."/>
            <person name="Phillimore B."/>
            <person name="Porter K."/>
            <person name="Rice C.M."/>
            <person name="Rogosin A."/>
            <person name="Ross M.T."/>
            <person name="Sarafidou T."/>
            <person name="Sehra H.K."/>
            <person name="Shownkeen R."/>
            <person name="Skuce C.D."/>
            <person name="Smith M."/>
            <person name="Standring L."/>
            <person name="Sycamore N."/>
            <person name="Tester J."/>
            <person name="Thorpe A."/>
            <person name="Torcasso W."/>
            <person name="Tracey A."/>
            <person name="Tromans A."/>
            <person name="Tsolas J."/>
            <person name="Wall M."/>
            <person name="Walsh J."/>
            <person name="Wang H."/>
            <person name="Weinstock K."/>
            <person name="West A.P."/>
            <person name="Willey D.L."/>
            <person name="Whitehead S.L."/>
            <person name="Wilming L."/>
            <person name="Wray P.W."/>
            <person name="Young L."/>
            <person name="Chen Y."/>
            <person name="Lovering R.C."/>
            <person name="Moschonas N.K."/>
            <person name="Siebert R."/>
            <person name="Fechtel K."/>
            <person name="Bentley D."/>
            <person name="Durbin R.M."/>
            <person name="Hubbard T."/>
            <person name="Doucette-Stamm L."/>
            <person name="Beck S."/>
            <person name="Smith D.R."/>
            <person name="Rogers J."/>
        </authorList>
    </citation>
    <scope>NUCLEOTIDE SEQUENCE [LARGE SCALE GENOMIC DNA]</scope>
</reference>
<reference key="3">
    <citation type="journal article" date="2004" name="Genome Res.">
        <title>The status, quality, and expansion of the NIH full-length cDNA project: the Mammalian Gene Collection (MGC).</title>
        <authorList>
            <consortium name="The MGC Project Team"/>
        </authorList>
    </citation>
    <scope>NUCLEOTIDE SEQUENCE [LARGE SCALE MRNA] (ISOFORM 2)</scope>
    <source>
        <tissue>Uterus</tissue>
    </source>
</reference>
<reference key="4">
    <citation type="journal article" date="2011" name="BMC Syst. Biol.">
        <title>Initial characterization of the human central proteome.</title>
        <authorList>
            <person name="Burkard T.R."/>
            <person name="Planyavsky M."/>
            <person name="Kaupe I."/>
            <person name="Breitwieser F.P."/>
            <person name="Buerckstuemmer T."/>
            <person name="Bennett K.L."/>
            <person name="Superti-Furga G."/>
            <person name="Colinge J."/>
        </authorList>
    </citation>
    <scope>IDENTIFICATION BY MASS SPECTROMETRY [LARGE SCALE ANALYSIS]</scope>
</reference>
<reference key="5">
    <citation type="journal article" date="2014" name="J. Proteomics">
        <title>An enzyme assisted RP-RPLC approach for in-depth analysis of human liver phosphoproteome.</title>
        <authorList>
            <person name="Bian Y."/>
            <person name="Song C."/>
            <person name="Cheng K."/>
            <person name="Dong M."/>
            <person name="Wang F."/>
            <person name="Huang J."/>
            <person name="Sun D."/>
            <person name="Wang L."/>
            <person name="Ye M."/>
            <person name="Zou H."/>
        </authorList>
    </citation>
    <scope>IDENTIFICATION BY MASS SPECTROMETRY [LARGE SCALE ANALYSIS]</scope>
    <source>
        <tissue>Liver</tissue>
    </source>
</reference>
<reference key="6">
    <citation type="journal article" date="2018" name="Hum. Mol. Genet.">
        <title>Biallelic mutations in human NHLRC2 enhance myofibroblast differentiation in FINCA disease.</title>
        <authorList>
            <person name="Paakkola T."/>
            <person name="Salokas K."/>
            <person name="Miinalainen I."/>
            <person name="Lehtonen S."/>
            <person name="Manninen A."/>
            <person name="Kaakinen M."/>
            <person name="Ruddock L.W."/>
            <person name="Varjosalo M."/>
            <person name="Kaarteenaho R."/>
            <person name="Uusimaa J."/>
            <person name="Hinttala R."/>
        </authorList>
    </citation>
    <scope>SUBCELLULAR LOCATION</scope>
</reference>
<reference evidence="8 9" key="7">
    <citation type="journal article" date="2018" name="PLoS ONE">
        <title>Structural analysis of human NHLRC2, mutations of which are associated with FINCA disease.</title>
        <authorList>
            <person name="Biterova E."/>
            <person name="Ignatyev A."/>
            <person name="Uusimaa J."/>
            <person name="Hinttala R."/>
            <person name="Ruddock L.W."/>
        </authorList>
    </citation>
    <scope>X-RAY CRYSTALLOGRAPHY (1.75 ANGSTROMS) OF 221-572</scope>
    <scope>X-RAY CRYSTALLOGRAPHY (2.7 ANGSTROMS) OF 1-572</scope>
    <scope>SUBUNIT</scope>
    <scope>CHARACTERIZATION OF VARIANT TYR-148</scope>
</reference>
<reference key="8">
    <citation type="journal article" date="2018" name="Acta Neuropathol.">
        <title>NHLRC2 variants identified in patients with fibrosis, neurodegeneration, and cerebral angiomatosis (FINCA): characterisation of a novel cerebropulmonary disease.</title>
        <authorList>
            <person name="Uusimaa J."/>
            <person name="Kaarteenaho R."/>
            <person name="Paakkola T."/>
            <person name="Tuominen H."/>
            <person name="Karjalainen M.K."/>
            <person name="Nadaf J."/>
            <person name="Varilo T."/>
            <person name="Uusi-Maekelae M."/>
            <person name="Suo-Palosaari M."/>
            <person name="Pietilae I."/>
            <person name="Hiltunen A.E."/>
            <person name="Ruddock L."/>
            <person name="Alanen H."/>
            <person name="Biterova E."/>
            <person name="Miinalainen I."/>
            <person name="Salminen A."/>
            <person name="Soininen R."/>
            <person name="Manninen A."/>
            <person name="Sormunen R."/>
            <person name="Kaakinen M."/>
            <person name="Vuolteenaho R."/>
            <person name="Herva R."/>
            <person name="Vieira P."/>
            <person name="Dunder T."/>
            <person name="Kokkonen H."/>
            <person name="Moilanen J.S."/>
            <person name="Rantala H."/>
            <person name="Nogee L.M."/>
            <person name="Majewski J."/>
            <person name="Raemet M."/>
            <person name="Hallman M."/>
            <person name="Hinttala R."/>
        </authorList>
    </citation>
    <scope>VARIANT FINCA TYR-148</scope>
    <scope>LACK OF THIOREDOXIN ACTIVITY</scope>
    <scope>TISSUE SPECIFICITY</scope>
    <scope>INVOLVEMENT IN FINCA</scope>
</reference>
<gene>
    <name type="primary">NHLRC2</name>
</gene>
<organism>
    <name type="scientific">Homo sapiens</name>
    <name type="common">Human</name>
    <dbReference type="NCBI Taxonomy" id="9606"/>
    <lineage>
        <taxon>Eukaryota</taxon>
        <taxon>Metazoa</taxon>
        <taxon>Chordata</taxon>
        <taxon>Craniata</taxon>
        <taxon>Vertebrata</taxon>
        <taxon>Euteleostomi</taxon>
        <taxon>Mammalia</taxon>
        <taxon>Eutheria</taxon>
        <taxon>Euarchontoglires</taxon>
        <taxon>Primates</taxon>
        <taxon>Haplorrhini</taxon>
        <taxon>Catarrhini</taxon>
        <taxon>Hominidae</taxon>
        <taxon>Homo</taxon>
    </lineage>
</organism>
<dbReference type="EMBL" id="AK090631">
    <property type="protein sequence ID" value="BAC03493.1"/>
    <property type="molecule type" value="mRNA"/>
</dbReference>
<dbReference type="EMBL" id="AK098487">
    <property type="protein sequence ID" value="BAC05316.1"/>
    <property type="status" value="ALT_INIT"/>
    <property type="molecule type" value="mRNA"/>
</dbReference>
<dbReference type="EMBL" id="AL162407">
    <property type="status" value="NOT_ANNOTATED_CDS"/>
    <property type="molecule type" value="Genomic_DNA"/>
</dbReference>
<dbReference type="EMBL" id="AL592546">
    <property type="status" value="NOT_ANNOTATED_CDS"/>
    <property type="molecule type" value="Genomic_DNA"/>
</dbReference>
<dbReference type="EMBL" id="AL627429">
    <property type="status" value="NOT_ANNOTATED_CDS"/>
    <property type="molecule type" value="Genomic_DNA"/>
</dbReference>
<dbReference type="EMBL" id="BC032598">
    <property type="protein sequence ID" value="AAH32598.1"/>
    <property type="molecule type" value="mRNA"/>
</dbReference>
<dbReference type="CCDS" id="CCDS7585.1">
    <molecule id="Q8NBF2-1"/>
</dbReference>
<dbReference type="RefSeq" id="NP_940916.2">
    <molecule id="Q8NBF2-1"/>
    <property type="nucleotide sequence ID" value="NM_198514.3"/>
</dbReference>
<dbReference type="PDB" id="6G7W">
    <property type="method" value="X-ray"/>
    <property type="resolution" value="1.75 A"/>
    <property type="chains" value="A=221-572"/>
</dbReference>
<dbReference type="PDB" id="6GC1">
    <property type="method" value="X-ray"/>
    <property type="resolution" value="2.70 A"/>
    <property type="chains" value="A/B/C/D=1-572"/>
</dbReference>
<dbReference type="PDBsum" id="6G7W"/>
<dbReference type="PDBsum" id="6GC1"/>
<dbReference type="SASBDB" id="Q8NBF2"/>
<dbReference type="SMR" id="Q8NBF2"/>
<dbReference type="BioGRID" id="131892">
    <property type="interactions" value="383"/>
</dbReference>
<dbReference type="FunCoup" id="Q8NBF2">
    <property type="interactions" value="1297"/>
</dbReference>
<dbReference type="IntAct" id="Q8NBF2">
    <property type="interactions" value="15"/>
</dbReference>
<dbReference type="MINT" id="Q8NBF2"/>
<dbReference type="STRING" id="9606.ENSP00000358307"/>
<dbReference type="GlyGen" id="Q8NBF2">
    <property type="glycosylation" value="1 site, 1 O-linked glycan (1 site)"/>
</dbReference>
<dbReference type="iPTMnet" id="Q8NBF2"/>
<dbReference type="PhosphoSitePlus" id="Q8NBF2"/>
<dbReference type="BioMuta" id="NHLRC2"/>
<dbReference type="DMDM" id="74762548"/>
<dbReference type="jPOST" id="Q8NBF2"/>
<dbReference type="MassIVE" id="Q8NBF2"/>
<dbReference type="PaxDb" id="9606-ENSP00000358307"/>
<dbReference type="PeptideAtlas" id="Q8NBF2"/>
<dbReference type="ProteomicsDB" id="72761">
    <molecule id="Q8NBF2-1"/>
</dbReference>
<dbReference type="ProteomicsDB" id="72762">
    <molecule id="Q8NBF2-2"/>
</dbReference>
<dbReference type="Pumba" id="Q8NBF2"/>
<dbReference type="Antibodypedia" id="31898">
    <property type="antibodies" value="96 antibodies from 20 providers"/>
</dbReference>
<dbReference type="DNASU" id="374354"/>
<dbReference type="Ensembl" id="ENST00000369301.3">
    <molecule id="Q8NBF2-1"/>
    <property type="protein sequence ID" value="ENSP00000358307.3"/>
    <property type="gene ID" value="ENSG00000196865.4"/>
</dbReference>
<dbReference type="GeneID" id="374354"/>
<dbReference type="KEGG" id="hsa:374354"/>
<dbReference type="MANE-Select" id="ENST00000369301.3">
    <property type="protein sequence ID" value="ENSP00000358307.3"/>
    <property type="RefSeq nucleotide sequence ID" value="NM_198514.4"/>
    <property type="RefSeq protein sequence ID" value="NP_940916.2"/>
</dbReference>
<dbReference type="UCSC" id="uc001lax.3">
    <molecule id="Q8NBF2-1"/>
    <property type="organism name" value="human"/>
</dbReference>
<dbReference type="AGR" id="HGNC:24731"/>
<dbReference type="CTD" id="374354"/>
<dbReference type="DisGeNET" id="374354"/>
<dbReference type="GeneCards" id="NHLRC2"/>
<dbReference type="HGNC" id="HGNC:24731">
    <property type="gene designation" value="NHLRC2"/>
</dbReference>
<dbReference type="HPA" id="ENSG00000196865">
    <property type="expression patterns" value="Low tissue specificity"/>
</dbReference>
<dbReference type="MalaCards" id="NHLRC2"/>
<dbReference type="MIM" id="618277">
    <property type="type" value="gene"/>
</dbReference>
<dbReference type="MIM" id="618278">
    <property type="type" value="phenotype"/>
</dbReference>
<dbReference type="neXtProt" id="NX_Q8NBF2"/>
<dbReference type="OpenTargets" id="ENSG00000196865"/>
<dbReference type="Orphanet" id="621758">
    <property type="disease" value="Fibrosis-neurodegeneration-cerebral angiomatosis syndrome"/>
</dbReference>
<dbReference type="PharmGKB" id="PA134883896"/>
<dbReference type="VEuPathDB" id="HostDB:ENSG00000196865"/>
<dbReference type="eggNOG" id="KOG2177">
    <property type="taxonomic scope" value="Eukaryota"/>
</dbReference>
<dbReference type="GeneTree" id="ENSGT00390000015483"/>
<dbReference type="HOGENOM" id="CLU_013730_0_0_1"/>
<dbReference type="InParanoid" id="Q8NBF2"/>
<dbReference type="OMA" id="IAMAGVH"/>
<dbReference type="OrthoDB" id="273823at2759"/>
<dbReference type="PAN-GO" id="Q8NBF2">
    <property type="GO annotations" value="0 GO annotations based on evolutionary models"/>
</dbReference>
<dbReference type="PhylomeDB" id="Q8NBF2"/>
<dbReference type="TreeFam" id="TF323628"/>
<dbReference type="PathwayCommons" id="Q8NBF2"/>
<dbReference type="Reactome" id="R-HSA-114608">
    <property type="pathway name" value="Platelet degranulation"/>
</dbReference>
<dbReference type="SignaLink" id="Q8NBF2"/>
<dbReference type="BioGRID-ORCS" id="374354">
    <property type="hits" value="566 hits in 1167 CRISPR screens"/>
</dbReference>
<dbReference type="ChiTaRS" id="NHLRC2">
    <property type="organism name" value="human"/>
</dbReference>
<dbReference type="GenomeRNAi" id="374354"/>
<dbReference type="Pharos" id="Q8NBF2">
    <property type="development level" value="Tbio"/>
</dbReference>
<dbReference type="PRO" id="PR:Q8NBF2"/>
<dbReference type="Proteomes" id="UP000005640">
    <property type="component" value="Chromosome 10"/>
</dbReference>
<dbReference type="RNAct" id="Q8NBF2">
    <property type="molecule type" value="protein"/>
</dbReference>
<dbReference type="Bgee" id="ENSG00000196865">
    <property type="expression patterns" value="Expressed in visceral pleura and 192 other cell types or tissues"/>
</dbReference>
<dbReference type="GO" id="GO:0005829">
    <property type="term" value="C:cytosol"/>
    <property type="evidence" value="ECO:0000314"/>
    <property type="project" value="UniProtKB"/>
</dbReference>
<dbReference type="GO" id="GO:0005576">
    <property type="term" value="C:extracellular region"/>
    <property type="evidence" value="ECO:0000304"/>
    <property type="project" value="Reactome"/>
</dbReference>
<dbReference type="GO" id="GO:0031093">
    <property type="term" value="C:platelet alpha granule lumen"/>
    <property type="evidence" value="ECO:0000304"/>
    <property type="project" value="Reactome"/>
</dbReference>
<dbReference type="CDD" id="cd14951">
    <property type="entry name" value="NHL-2_like"/>
    <property type="match status" value="1"/>
</dbReference>
<dbReference type="CDD" id="cd03012">
    <property type="entry name" value="TlpA_like_DipZ_like"/>
    <property type="match status" value="1"/>
</dbReference>
<dbReference type="FunFam" id="2.120.10.30:FF:000062">
    <property type="entry name" value="NHL repeat containing 2"/>
    <property type="match status" value="1"/>
</dbReference>
<dbReference type="FunFam" id="2.120.10.30:FF:000104">
    <property type="entry name" value="NHL repeat containing 2"/>
    <property type="match status" value="1"/>
</dbReference>
<dbReference type="FunFam" id="2.120.10.30:FF:000086">
    <property type="entry name" value="NHL repeat-containing protein 2"/>
    <property type="match status" value="1"/>
</dbReference>
<dbReference type="FunFam" id="3.40.30.10:FF:000108">
    <property type="entry name" value="NHL repeat-containing protein 2"/>
    <property type="match status" value="1"/>
</dbReference>
<dbReference type="Gene3D" id="3.40.30.10">
    <property type="entry name" value="Glutaredoxin"/>
    <property type="match status" value="1"/>
</dbReference>
<dbReference type="Gene3D" id="2.120.10.30">
    <property type="entry name" value="TolB, C-terminal domain"/>
    <property type="match status" value="3"/>
</dbReference>
<dbReference type="InterPro" id="IPR011042">
    <property type="entry name" value="6-blade_b-propeller_TolB-like"/>
</dbReference>
<dbReference type="InterPro" id="IPR045302">
    <property type="entry name" value="NHL2_NHL_rpt_dom"/>
</dbReference>
<dbReference type="InterPro" id="IPR001258">
    <property type="entry name" value="NHL_repeat"/>
</dbReference>
<dbReference type="InterPro" id="IPR012336">
    <property type="entry name" value="Thioredoxin-like_fold"/>
</dbReference>
<dbReference type="InterPro" id="IPR036249">
    <property type="entry name" value="Thioredoxin-like_sf"/>
</dbReference>
<dbReference type="InterPro" id="IPR013766">
    <property type="entry name" value="Thioredoxin_domain"/>
</dbReference>
<dbReference type="PANTHER" id="PTHR46388">
    <property type="entry name" value="NHL REPEAT-CONTAINING PROTEIN 2"/>
    <property type="match status" value="1"/>
</dbReference>
<dbReference type="PANTHER" id="PTHR46388:SF2">
    <property type="entry name" value="NHL REPEAT-CONTAINING PROTEIN 2"/>
    <property type="match status" value="1"/>
</dbReference>
<dbReference type="Pfam" id="PF01436">
    <property type="entry name" value="NHL"/>
    <property type="match status" value="4"/>
</dbReference>
<dbReference type="Pfam" id="PF13905">
    <property type="entry name" value="Thioredoxin_8"/>
    <property type="match status" value="1"/>
</dbReference>
<dbReference type="SUPFAM" id="SSF101898">
    <property type="entry name" value="NHL repeat"/>
    <property type="match status" value="1"/>
</dbReference>
<dbReference type="SUPFAM" id="SSF52833">
    <property type="entry name" value="Thioredoxin-like"/>
    <property type="match status" value="1"/>
</dbReference>
<dbReference type="PROSITE" id="PS51125">
    <property type="entry name" value="NHL"/>
    <property type="match status" value="4"/>
</dbReference>
<dbReference type="PROSITE" id="PS51352">
    <property type="entry name" value="THIOREDOXIN_2"/>
    <property type="match status" value="1"/>
</dbReference>
<keyword id="KW-0002">3D-structure</keyword>
<keyword id="KW-0025">Alternative splicing</keyword>
<keyword id="KW-0963">Cytoplasm</keyword>
<keyword id="KW-0225">Disease variant</keyword>
<keyword id="KW-0523">Neurodegeneration</keyword>
<keyword id="KW-1267">Proteomics identification</keyword>
<keyword id="KW-1185">Reference proteome</keyword>
<keyword id="KW-0677">Repeat</keyword>
<protein>
    <recommendedName>
        <fullName>NHL repeat-containing protein 2</fullName>
    </recommendedName>
</protein>
<comment type="function">
    <text evidence="1">Required for normal embryonic development.</text>
</comment>
<comment type="subunit">
    <text evidence="4">Monomer.</text>
</comment>
<comment type="interaction">
    <interactant intactId="EBI-10269163">
        <id>Q8NBF2</id>
    </interactant>
    <interactant intactId="EBI-742887">
        <id>Q8TAP6</id>
        <label>CEP76</label>
    </interactant>
    <organismsDiffer>false</organismsDiffer>
    <experiments>3</experiments>
</comment>
<comment type="interaction">
    <interactant intactId="EBI-10697320">
        <id>Q8NBF2-2</id>
    </interactant>
    <interactant intactId="EBI-742887">
        <id>Q8TAP6</id>
        <label>CEP76</label>
    </interactant>
    <organismsDiffer>false</organismsDiffer>
    <experiments>3</experiments>
</comment>
<comment type="interaction">
    <interactant intactId="EBI-10697320">
        <id>Q8NBF2-2</id>
    </interactant>
    <interactant intactId="EBI-352682">
        <id>P04792</id>
        <label>HSPB1</label>
    </interactant>
    <organismsDiffer>false</organismsDiffer>
    <experiments>3</experiments>
</comment>
<comment type="interaction">
    <interactant intactId="EBI-10697320">
        <id>Q8NBF2-2</id>
    </interactant>
    <interactant intactId="EBI-10975473">
        <id>O60333-2</id>
        <label>KIF1B</label>
    </interactant>
    <organismsDiffer>false</organismsDiffer>
    <experiments>3</experiments>
</comment>
<comment type="interaction">
    <interactant intactId="EBI-10697320">
        <id>Q8NBF2-2</id>
    </interactant>
    <interactant intactId="EBI-396669">
        <id>Q9Y3C5</id>
        <label>RNF11</label>
    </interactant>
    <organismsDiffer>false</organismsDiffer>
    <experiments>3</experiments>
</comment>
<comment type="interaction">
    <interactant intactId="EBI-10697320">
        <id>Q8NBF2-2</id>
    </interactant>
    <interactant intactId="EBI-10239812">
        <id>Q96M29</id>
        <label>TEKT5</label>
    </interactant>
    <organismsDiffer>false</organismsDiffer>
    <experiments>3</experiments>
</comment>
<comment type="subcellular location">
    <subcellularLocation>
        <location evidence="5">Cytoplasm</location>
        <location evidence="5">Cytosol</location>
    </subcellularLocation>
</comment>
<comment type="alternative products">
    <event type="alternative splicing"/>
    <isoform>
        <id>Q8NBF2-1</id>
        <name>1</name>
        <sequence type="displayed"/>
    </isoform>
    <isoform>
        <id>Q8NBF2-2</id>
        <name>2</name>
        <sequence type="described" ref="VSP_030153"/>
    </isoform>
</comment>
<comment type="tissue specificity">
    <text evidence="3">Ubiquitous. Detected in heart, kidney, muscle, brain, lung, liver and in skin fibroblasts (at protein level).</text>
</comment>
<comment type="disease" evidence="3">
    <disease id="DI-05458">
        <name>Fibrosis, neurodegeneration, and cerebral angiomatosis</name>
        <acronym>FINCA</acronym>
        <description>An autosomal recessive, early-onset and fatal disorder clinically characterized by progressive cerebropulmonary symptoms, malabsorption, progressive growth failure, recurrent infections, chronic hemolytic anemia and transient liver dysfunction. Death occurs in the first years of life due to respiratory failure. Post-mortem neuropathological examination reveals increased angiomatosis-like leptomeningeal, cortical and superficial white matter vascularisation and congestion, vacuolar degeneration and myelin loss in white matter, as well as neuronal degeneration. Interstitial fibrosis and granuloma-like lesions are observed in the lungs. Hepatomegaly, steatosis and collagen accumulation are detected in the liver.</description>
        <dbReference type="MIM" id="618278"/>
    </disease>
    <text>The disease is caused by variants affecting the gene represented in this entry.</text>
</comment>
<comment type="caution">
    <text evidence="3">Contains a thioredoxin domain, but lacks thioredoxin activity.</text>
</comment>
<comment type="sequence caution" evidence="7">
    <conflict type="erroneous initiation">
        <sequence resource="EMBL-CDS" id="BAC05316"/>
    </conflict>
</comment>
<accession>Q8NBF2</accession>
<accession>Q8N1H1</accession>
<accession>Q8N5A6</accession>
<evidence type="ECO:0000250" key="1">
    <source>
        <dbReference type="UniProtKB" id="Q8BZW8"/>
    </source>
</evidence>
<evidence type="ECO:0000255" key="2">
    <source>
        <dbReference type="PROSITE-ProRule" id="PRU00691"/>
    </source>
</evidence>
<evidence type="ECO:0000269" key="3">
    <source>
    </source>
</evidence>
<evidence type="ECO:0000269" key="4">
    <source>
    </source>
</evidence>
<evidence type="ECO:0000269" key="5">
    <source>
    </source>
</evidence>
<evidence type="ECO:0000303" key="6">
    <source>
    </source>
</evidence>
<evidence type="ECO:0000305" key="7"/>
<evidence type="ECO:0007744" key="8">
    <source>
        <dbReference type="PDB" id="6G7W"/>
    </source>
</evidence>
<evidence type="ECO:0007744" key="9">
    <source>
        <dbReference type="PDB" id="6GC1"/>
    </source>
</evidence>
<evidence type="ECO:0007829" key="10">
    <source>
        <dbReference type="PDB" id="6G7W"/>
    </source>
</evidence>
<evidence type="ECO:0007829" key="11">
    <source>
        <dbReference type="PDB" id="6GC1"/>
    </source>
</evidence>
<sequence>MAAPGGRGRSLSGLLPAQTSLEYALLDAVTQQEKDSLVYQYLQKVDGWEQDLSVPEFPEGLEWLNTEEPISVYKDLCGKIVVLDFFTYCCINCIHLLPDLHALEHTYSDKDGLLIIGVHSAKFPNEKVLDNIKSAVLRYNITHPMVNDADASLWQELEVSCWPTLVILGPRGNMLFSLIGEGHKDKLFLYTSIALKYYKDRGQIRDNKIGIKLYKDSLPPSPLLFPGKVTVDQVTDRLVIADTGHHRILVVWKNGQIQYSIGGPNPGRKDGIFSESTFNSPQGVAIMNNIIYVADTENHLIRKIDLEAEKVSTVAGIGIQGTDKEGGAKGEQQPISSPWDVVFGTSGSEVQRGDILWIAMAGTHQIWALLLDSGKLPKKNELTKGTCLRFAGSGNEENRNNAYPHKAGFAQPSGLSLASEDPWSCLFVADSESSTVRTVSLKDGAVKHLVGGERDPMNLFAFGDVDGVGINAKLQHPLGVTWDKKRNLLYVADSYNHKIKVVDPKTKNCTTLAGTGDTNNVTSSSFTESTFNEPGGLCIGENGELLYVADTNNHQIKVMDLETKMVSVLPIFRSENAVVDGPFLVEKQKTLPKLPKSAPSIRLSPVTACAGQTLQFKLRLDLPSGSKLTEGVSSCWFLTAEGNEWLLQGQIAAGDIENISSQPTISLQIPDDCLSLEAIVSVSVFLYYCSADSSACMMKAILFSQPLQITDTQQGCIAPVELRYVF</sequence>